<protein>
    <recommendedName>
        <fullName evidence="1">Large ribosomal subunit protein bL19</fullName>
    </recommendedName>
    <alternativeName>
        <fullName evidence="2">50S ribosomal protein L19</fullName>
    </alternativeName>
</protein>
<dbReference type="EMBL" id="CP000918">
    <property type="protein sequence ID" value="ACO15971.1"/>
    <property type="molecule type" value="Genomic_DNA"/>
</dbReference>
<dbReference type="RefSeq" id="WP_001068669.1">
    <property type="nucleotide sequence ID" value="NC_012468.1"/>
</dbReference>
<dbReference type="SMR" id="C1C7S2"/>
<dbReference type="GeneID" id="93739485"/>
<dbReference type="KEGG" id="snm:SP70585_1358"/>
<dbReference type="HOGENOM" id="CLU_103507_2_1_9"/>
<dbReference type="Proteomes" id="UP000002211">
    <property type="component" value="Chromosome"/>
</dbReference>
<dbReference type="GO" id="GO:0022625">
    <property type="term" value="C:cytosolic large ribosomal subunit"/>
    <property type="evidence" value="ECO:0007669"/>
    <property type="project" value="TreeGrafter"/>
</dbReference>
<dbReference type="GO" id="GO:0003735">
    <property type="term" value="F:structural constituent of ribosome"/>
    <property type="evidence" value="ECO:0007669"/>
    <property type="project" value="InterPro"/>
</dbReference>
<dbReference type="GO" id="GO:0006412">
    <property type="term" value="P:translation"/>
    <property type="evidence" value="ECO:0007669"/>
    <property type="project" value="UniProtKB-UniRule"/>
</dbReference>
<dbReference type="FunFam" id="2.30.30.790:FF:000001">
    <property type="entry name" value="50S ribosomal protein L19"/>
    <property type="match status" value="1"/>
</dbReference>
<dbReference type="Gene3D" id="2.30.30.790">
    <property type="match status" value="1"/>
</dbReference>
<dbReference type="HAMAP" id="MF_00402">
    <property type="entry name" value="Ribosomal_bL19"/>
    <property type="match status" value="1"/>
</dbReference>
<dbReference type="InterPro" id="IPR001857">
    <property type="entry name" value="Ribosomal_bL19"/>
</dbReference>
<dbReference type="InterPro" id="IPR018257">
    <property type="entry name" value="Ribosomal_bL19_CS"/>
</dbReference>
<dbReference type="InterPro" id="IPR038657">
    <property type="entry name" value="Ribosomal_bL19_sf"/>
</dbReference>
<dbReference type="InterPro" id="IPR008991">
    <property type="entry name" value="Translation_prot_SH3-like_sf"/>
</dbReference>
<dbReference type="NCBIfam" id="TIGR01024">
    <property type="entry name" value="rplS_bact"/>
    <property type="match status" value="1"/>
</dbReference>
<dbReference type="PANTHER" id="PTHR15680:SF9">
    <property type="entry name" value="LARGE RIBOSOMAL SUBUNIT PROTEIN BL19M"/>
    <property type="match status" value="1"/>
</dbReference>
<dbReference type="PANTHER" id="PTHR15680">
    <property type="entry name" value="RIBOSOMAL PROTEIN L19"/>
    <property type="match status" value="1"/>
</dbReference>
<dbReference type="Pfam" id="PF01245">
    <property type="entry name" value="Ribosomal_L19"/>
    <property type="match status" value="1"/>
</dbReference>
<dbReference type="PIRSF" id="PIRSF002191">
    <property type="entry name" value="Ribosomal_L19"/>
    <property type="match status" value="1"/>
</dbReference>
<dbReference type="PRINTS" id="PR00061">
    <property type="entry name" value="RIBOSOMALL19"/>
</dbReference>
<dbReference type="SUPFAM" id="SSF50104">
    <property type="entry name" value="Translation proteins SH3-like domain"/>
    <property type="match status" value="1"/>
</dbReference>
<dbReference type="PROSITE" id="PS01015">
    <property type="entry name" value="RIBOSOMAL_L19"/>
    <property type="match status" value="1"/>
</dbReference>
<feature type="chain" id="PRO_1000193893" description="Large ribosomal subunit protein bL19">
    <location>
        <begin position="1"/>
        <end position="115"/>
    </location>
</feature>
<accession>C1C7S2</accession>
<sequence length="115" mass="13136">MNPLIQSLTEGQLRTDIPSFRPGDTVRVHAKVVEGNRERIQIFEGVVIARKGAGISENYTVRKISNGVGVERIFPIHTPRVEKIEVVRYGKVRRAKLYYLRALQGKAARIKEIRR</sequence>
<name>RL19_STRP7</name>
<gene>
    <name evidence="1" type="primary">rplS</name>
    <name type="ordered locus">SP70585_1358</name>
</gene>
<keyword id="KW-0687">Ribonucleoprotein</keyword>
<keyword id="KW-0689">Ribosomal protein</keyword>
<organism>
    <name type="scientific">Streptococcus pneumoniae (strain 70585)</name>
    <dbReference type="NCBI Taxonomy" id="488221"/>
    <lineage>
        <taxon>Bacteria</taxon>
        <taxon>Bacillati</taxon>
        <taxon>Bacillota</taxon>
        <taxon>Bacilli</taxon>
        <taxon>Lactobacillales</taxon>
        <taxon>Streptococcaceae</taxon>
        <taxon>Streptococcus</taxon>
    </lineage>
</organism>
<reference key="1">
    <citation type="journal article" date="2010" name="Genome Biol.">
        <title>Structure and dynamics of the pan-genome of Streptococcus pneumoniae and closely related species.</title>
        <authorList>
            <person name="Donati C."/>
            <person name="Hiller N.L."/>
            <person name="Tettelin H."/>
            <person name="Muzzi A."/>
            <person name="Croucher N.J."/>
            <person name="Angiuoli S.V."/>
            <person name="Oggioni M."/>
            <person name="Dunning Hotopp J.C."/>
            <person name="Hu F.Z."/>
            <person name="Riley D.R."/>
            <person name="Covacci A."/>
            <person name="Mitchell T.J."/>
            <person name="Bentley S.D."/>
            <person name="Kilian M."/>
            <person name="Ehrlich G.D."/>
            <person name="Rappuoli R."/>
            <person name="Moxon E.R."/>
            <person name="Masignani V."/>
        </authorList>
    </citation>
    <scope>NUCLEOTIDE SEQUENCE [LARGE SCALE GENOMIC DNA]</scope>
    <source>
        <strain>70585</strain>
    </source>
</reference>
<proteinExistence type="inferred from homology"/>
<evidence type="ECO:0000255" key="1">
    <source>
        <dbReference type="HAMAP-Rule" id="MF_00402"/>
    </source>
</evidence>
<evidence type="ECO:0000305" key="2"/>
<comment type="function">
    <text evidence="1">This protein is located at the 30S-50S ribosomal subunit interface and may play a role in the structure and function of the aminoacyl-tRNA binding site.</text>
</comment>
<comment type="similarity">
    <text evidence="1">Belongs to the bacterial ribosomal protein bL19 family.</text>
</comment>